<name>DGTL1_ALIFM</name>
<proteinExistence type="inferred from homology"/>
<organism>
    <name type="scientific">Aliivibrio fischeri (strain MJ11)</name>
    <name type="common">Vibrio fischeri</name>
    <dbReference type="NCBI Taxonomy" id="388396"/>
    <lineage>
        <taxon>Bacteria</taxon>
        <taxon>Pseudomonadati</taxon>
        <taxon>Pseudomonadota</taxon>
        <taxon>Gammaproteobacteria</taxon>
        <taxon>Vibrionales</taxon>
        <taxon>Vibrionaceae</taxon>
        <taxon>Aliivibrio</taxon>
    </lineage>
</organism>
<sequence>MNKPNEITLSPHWEDRISNEQKLRRNDQRSVFQRDRARILHSAAFRRLQAKTQVHGPGSANDFYRTRLTHSLEVSQIGTGVVAQLKLRQPEFRALLTSTSLMESICLAHDIGHPPFGHGGEIALNYMMRDHGGFEGNGQTLRILSKLEPYTEHFGMNLARRTLLGVLKYPAFLDQVHSTERPQEVSNVRHLKSIDWHPPKGVYRDDADILNWILKPLSDVDKALFSTFRFQQESQHTHRKTRFKSIDCSIMELADDIAYGVHDLEDAIVMGIVTRNQWQESVASKLAECGDEWFEANIETISDKLFSGLQYQRKDGIGSIVNALLTSITIKPTTFNDEPEFESELLRWNAFLSPSMSYALEVLKKFVGQFVIHNSEMQRIEYKGQQIVMEIFDALNSDPERLLPENDKREWREAKESGANAHRVIADYIAGMTDGYAQRLYNQLFVPI</sequence>
<keyword id="KW-0378">Hydrolase</keyword>
<accession>B5FFM1</accession>
<comment type="similarity">
    <text evidence="1">Belongs to the dGTPase family. Type 2 subfamily.</text>
</comment>
<gene>
    <name type="ordered locus">VFMJ11_1806</name>
</gene>
<protein>
    <recommendedName>
        <fullName evidence="1">Deoxyguanosinetriphosphate triphosphohydrolase-like protein</fullName>
    </recommendedName>
</protein>
<evidence type="ECO:0000255" key="1">
    <source>
        <dbReference type="HAMAP-Rule" id="MF_01212"/>
    </source>
</evidence>
<evidence type="ECO:0000255" key="2">
    <source>
        <dbReference type="PROSITE-ProRule" id="PRU01175"/>
    </source>
</evidence>
<dbReference type="EMBL" id="CP001139">
    <property type="protein sequence ID" value="ACH66450.1"/>
    <property type="molecule type" value="Genomic_DNA"/>
</dbReference>
<dbReference type="RefSeq" id="WP_012533735.1">
    <property type="nucleotide sequence ID" value="NC_011184.1"/>
</dbReference>
<dbReference type="SMR" id="B5FFM1"/>
<dbReference type="KEGG" id="vfm:VFMJ11_1806"/>
<dbReference type="HOGENOM" id="CLU_028163_0_0_6"/>
<dbReference type="Proteomes" id="UP000001857">
    <property type="component" value="Chromosome I"/>
</dbReference>
<dbReference type="GO" id="GO:0008832">
    <property type="term" value="F:dGTPase activity"/>
    <property type="evidence" value="ECO:0007669"/>
    <property type="project" value="TreeGrafter"/>
</dbReference>
<dbReference type="GO" id="GO:0006203">
    <property type="term" value="P:dGTP catabolic process"/>
    <property type="evidence" value="ECO:0007669"/>
    <property type="project" value="TreeGrafter"/>
</dbReference>
<dbReference type="CDD" id="cd00077">
    <property type="entry name" value="HDc"/>
    <property type="match status" value="1"/>
</dbReference>
<dbReference type="Gene3D" id="1.10.3210.10">
    <property type="entry name" value="Hypothetical protein af1432"/>
    <property type="match status" value="1"/>
</dbReference>
<dbReference type="HAMAP" id="MF_01212">
    <property type="entry name" value="dGTPase_type2"/>
    <property type="match status" value="1"/>
</dbReference>
<dbReference type="InterPro" id="IPR006261">
    <property type="entry name" value="dGTPase"/>
</dbReference>
<dbReference type="InterPro" id="IPR050135">
    <property type="entry name" value="dGTPase-like"/>
</dbReference>
<dbReference type="InterPro" id="IPR023023">
    <property type="entry name" value="dNTPase_2"/>
</dbReference>
<dbReference type="InterPro" id="IPR003607">
    <property type="entry name" value="HD/PDEase_dom"/>
</dbReference>
<dbReference type="InterPro" id="IPR006674">
    <property type="entry name" value="HD_domain"/>
</dbReference>
<dbReference type="InterPro" id="IPR026875">
    <property type="entry name" value="PHydrolase_assoc_dom"/>
</dbReference>
<dbReference type="NCBIfam" id="NF041026">
    <property type="entry name" value="antiphage_dGTPase"/>
    <property type="match status" value="1"/>
</dbReference>
<dbReference type="NCBIfam" id="TIGR01353">
    <property type="entry name" value="dGTP_triPase"/>
    <property type="match status" value="1"/>
</dbReference>
<dbReference type="NCBIfam" id="NF003701">
    <property type="entry name" value="PRK05318.1"/>
    <property type="match status" value="1"/>
</dbReference>
<dbReference type="PANTHER" id="PTHR11373:SF40">
    <property type="entry name" value="DEOXYGUANOSINETRIPHOSPHATE TRIPHOSPHOHYDROLASE-LIKE PROTEIN 2"/>
    <property type="match status" value="1"/>
</dbReference>
<dbReference type="PANTHER" id="PTHR11373">
    <property type="entry name" value="DEOXYNUCLEOSIDE TRIPHOSPHATE TRIPHOSPHOHYDROLASE"/>
    <property type="match status" value="1"/>
</dbReference>
<dbReference type="Pfam" id="PF01966">
    <property type="entry name" value="HD"/>
    <property type="match status" value="1"/>
</dbReference>
<dbReference type="Pfam" id="PF13286">
    <property type="entry name" value="HD_assoc"/>
    <property type="match status" value="1"/>
</dbReference>
<dbReference type="SMART" id="SM00471">
    <property type="entry name" value="HDc"/>
    <property type="match status" value="1"/>
</dbReference>
<dbReference type="SUPFAM" id="SSF109604">
    <property type="entry name" value="HD-domain/PDEase-like"/>
    <property type="match status" value="1"/>
</dbReference>
<dbReference type="PROSITE" id="PS51831">
    <property type="entry name" value="HD"/>
    <property type="match status" value="1"/>
</dbReference>
<feature type="chain" id="PRO_1000138939" description="Deoxyguanosinetriphosphate triphosphohydrolase-like protein">
    <location>
        <begin position="1"/>
        <end position="448"/>
    </location>
</feature>
<feature type="domain" description="HD" evidence="2">
    <location>
        <begin position="67"/>
        <end position="260"/>
    </location>
</feature>
<reference key="1">
    <citation type="submission" date="2008-08" db="EMBL/GenBank/DDBJ databases">
        <title>Complete sequence of Vibrio fischeri strain MJ11.</title>
        <authorList>
            <person name="Mandel M.J."/>
            <person name="Stabb E.V."/>
            <person name="Ruby E.G."/>
            <person name="Ferriera S."/>
            <person name="Johnson J."/>
            <person name="Kravitz S."/>
            <person name="Beeson K."/>
            <person name="Sutton G."/>
            <person name="Rogers Y.-H."/>
            <person name="Friedman R."/>
            <person name="Frazier M."/>
            <person name="Venter J.C."/>
        </authorList>
    </citation>
    <scope>NUCLEOTIDE SEQUENCE [LARGE SCALE GENOMIC DNA]</scope>
    <source>
        <strain>MJ11</strain>
    </source>
</reference>